<gene>
    <name type="primary">KCNJ11</name>
</gene>
<organism>
    <name type="scientific">Cavia porcellus</name>
    <name type="common">Guinea pig</name>
    <dbReference type="NCBI Taxonomy" id="10141"/>
    <lineage>
        <taxon>Eukaryota</taxon>
        <taxon>Metazoa</taxon>
        <taxon>Chordata</taxon>
        <taxon>Craniata</taxon>
        <taxon>Vertebrata</taxon>
        <taxon>Euteleostomi</taxon>
        <taxon>Mammalia</taxon>
        <taxon>Eutheria</taxon>
        <taxon>Euarchontoglires</taxon>
        <taxon>Glires</taxon>
        <taxon>Rodentia</taxon>
        <taxon>Hystricomorpha</taxon>
        <taxon>Caviidae</taxon>
        <taxon>Cavia</taxon>
    </lineage>
</organism>
<feature type="chain" id="PRO_0000154956" description="ATP-sensitive inward rectifier potassium channel 11">
    <location>
        <begin position="1"/>
        <end position="390"/>
    </location>
</feature>
<feature type="topological domain" description="Cytoplasmic" evidence="4">
    <location>
        <begin position="1"/>
        <end position="65"/>
    </location>
</feature>
<feature type="transmembrane region" description="Helical; Name=M1" evidence="3">
    <location>
        <begin position="66"/>
        <end position="92"/>
    </location>
</feature>
<feature type="topological domain" description="Extracellular" evidence="4">
    <location>
        <begin position="93"/>
        <end position="116"/>
    </location>
</feature>
<feature type="intramembrane region" description="Discontinuously helical; Pore-forming" evidence="3">
    <location>
        <begin position="117"/>
        <end position="133"/>
    </location>
</feature>
<feature type="topological domain" description="Extracellular" evidence="4">
    <location>
        <begin position="134"/>
        <end position="142"/>
    </location>
</feature>
<feature type="transmembrane region" description="Helical; Name=M2" evidence="3">
    <location>
        <begin position="143"/>
        <end position="171"/>
    </location>
</feature>
<feature type="topological domain" description="Cytoplasmic" evidence="4">
    <location>
        <begin position="172"/>
        <end position="390"/>
    </location>
</feature>
<feature type="short sequence motif" description="Selectivity filter" evidence="4">
    <location>
        <begin position="130"/>
        <end position="135"/>
    </location>
</feature>
<feature type="binding site" evidence="3">
    <location>
        <position position="48"/>
    </location>
    <ligand>
        <name>ATP</name>
        <dbReference type="ChEBI" id="CHEBI:30616"/>
        <note>inhibitor</note>
    </ligand>
</feature>
<feature type="binding site" evidence="3">
    <location>
        <position position="50"/>
    </location>
    <ligand>
        <name>ATP</name>
        <dbReference type="ChEBI" id="CHEBI:30616"/>
        <note>inhibitor</note>
    </ligand>
</feature>
<feature type="binding site" evidence="3">
    <location>
        <position position="130"/>
    </location>
    <ligand>
        <name>K(+)</name>
        <dbReference type="ChEBI" id="CHEBI:29103"/>
        <label>1</label>
        <note>ligand shared between the four subunits of the homotetramer</note>
    </ligand>
</feature>
<feature type="binding site" evidence="3">
    <location>
        <position position="133"/>
    </location>
    <ligand>
        <name>K(+)</name>
        <dbReference type="ChEBI" id="CHEBI:29103"/>
        <label>2</label>
        <note>ligand shared between the four subunits of the homotetramer</note>
    </ligand>
</feature>
<feature type="binding site" evidence="2">
    <location>
        <position position="176"/>
    </location>
    <ligand>
        <name>a 1,2-diacyl-sn-glycero-3-phospho-(1D-myo-inositol-4,5-bisphosphate)</name>
        <dbReference type="ChEBI" id="CHEBI:58456"/>
    </ligand>
</feature>
<feature type="binding site" evidence="3">
    <location>
        <position position="330"/>
    </location>
    <ligand>
        <name>ATP</name>
        <dbReference type="ChEBI" id="CHEBI:30616"/>
        <note>inhibitor</note>
    </ligand>
</feature>
<feature type="site" description="Role in the control of polyamine-mediated channel gating and in the blocking by intracellular magnesium" evidence="1">
    <location>
        <position position="160"/>
    </location>
</feature>
<feature type="modified residue" description="Phosphothreonine; by MAPK1" evidence="3">
    <location>
        <position position="341"/>
    </location>
</feature>
<feature type="modified residue" description="Phosphoserine; by MAPK1" evidence="3">
    <location>
        <position position="385"/>
    </location>
</feature>
<feature type="disulfide bond" evidence="3">
    <location>
        <begin position="110"/>
        <end position="142"/>
    </location>
</feature>
<proteinExistence type="evidence at transcript level"/>
<evidence type="ECO:0000250" key="1"/>
<evidence type="ECO:0000250" key="2">
    <source>
        <dbReference type="UniProtKB" id="P70673"/>
    </source>
</evidence>
<evidence type="ECO:0000250" key="3">
    <source>
        <dbReference type="UniProtKB" id="Q14654"/>
    </source>
</evidence>
<evidence type="ECO:0000305" key="4"/>
<reference key="1">
    <citation type="journal article" date="2000" name="J. Physiol. (Lond.)">
        <title>ATP-sensitive potassium channels in capillaries isolated from guinea-pig heart.</title>
        <authorList>
            <person name="Mederos y Schnitzler M."/>
            <person name="Derst C."/>
            <person name="Daut J."/>
            <person name="Preisig-Mueller R."/>
        </authorList>
    </citation>
    <scope>NUCLEOTIDE SEQUENCE [GENOMIC DNA / MRNA]</scope>
</reference>
<sequence>MLSRKGIIPEEYVLTRLAEDPTEPRYRARERRARFVSKKGNCNVAHKNIREQGRFLQDVFTTLVDLKWPHTLLIFTMSFLCSWLLFAMVWWLIAFAHGDLAPGEGTTVPCVTSIHSFSSAFLFSIEVQVTIGFGGRMVTEECPLAILILIVQNIVGLMINAIMLGCIFMKTSQAHRRAETLIFSKHAVIALRHGRLCFMLRVGDLRKSMIISATIHMQVVRKTTSPEGEVVPLHQVDIPMENGVGGNSIFLVAPLIIYHVIDANSPLYDLGPSDLHHHQDLEIIVILEGVVETTGITTQARTSYLADEILWGHRFVPIVAEEDGRYSVDYSKFGNTIKVPTPLCTAHQLDEDHSLLDALTLASTRGPLRKRSVPVAKAKPRFSISPDSLS</sequence>
<name>KCJ11_CAVPO</name>
<accession>Q9JHJ9</accession>
<comment type="function">
    <text evidence="3">Inward rectifier potassium channel that forms the pore of ATP-sensitive potassium channels (KATP), regulating potassium permeability as a function of cytoplasmic ATP and ADP concentrations in many different cells (By similarity). Inward rectifier potassium channels are characterized by a greater tendency to allow potassium to flow into the cell rather than out of it. Their voltage dependence is regulated by the concentration of extracellular potassium; as external potassium is raised, the voltage range of the channel opening shifts to more positive voltages. The inward rectification is mainly due to the blockage of outward current by internal magnesium. Can be blocked by extracellular barium (By similarity). In pancreatic cells, it forms KATP channels with ABCC8/SUR1 (By similarity). Can form cardiac and smooth muscle-type KATP channels with ABCC9 (By similarity).</text>
</comment>
<comment type="catalytic activity">
    <reaction evidence="3">
        <text>K(+)(in) = K(+)(out)</text>
        <dbReference type="Rhea" id="RHEA:29463"/>
        <dbReference type="ChEBI" id="CHEBI:29103"/>
    </reaction>
</comment>
<comment type="activity regulation">
    <text evidence="3">KATP channels are regulated by cytoplasmic ATP/ADP ratios; ATP inhibits the channel by closing the pore, while ADP activates the channel. Activated by phosphatidylinositol 4,5-biphosphate (PtdIns(4,5)P2).</text>
</comment>
<comment type="subunit">
    <text evidence="3">Homotetramer; the homotetramer binds four ATP molecules (one ATP per subunit). Forms an heterooctamer with ABCC8/SUR1; one KCNJ11 homotetramer interacts with four ABCC8/SUR1 molecules. Interacts with ABCC9/SUR2.</text>
</comment>
<comment type="subcellular location">
    <subcellularLocation>
        <location evidence="3">Membrane</location>
        <topology evidence="3">Multi-pass membrane protein</topology>
    </subcellularLocation>
</comment>
<comment type="domain">
    <text evidence="2">There are two PtdIns(4,5)P2 binding sites: A canonical site where the phosphate groups of one PtdIns(4,5)P2 molecule are coordinated at least by residues Lys-67, Trp-68 and Arg-176; a non-canonical site where the second PtdIns(4,5)P2 molecule is coordinated by both KCNJ11 and ABCC8/SUR1 residues.</text>
</comment>
<comment type="PTM">
    <text evidence="1">Phosphorylation by MAPK1 results in changes in channel gating that destabilize the closed states and reduce the ATP sensitivity.</text>
</comment>
<comment type="similarity">
    <text evidence="4">Belongs to the inward rectifier-type potassium channel (TC 1.A.2.1) family. KCNJ11 subfamily.</text>
</comment>
<protein>
    <recommendedName>
        <fullName>ATP-sensitive inward rectifier potassium channel 11</fullName>
    </recommendedName>
    <alternativeName>
        <fullName>IKATP</fullName>
    </alternativeName>
    <alternativeName>
        <fullName>Inward rectifier K(+) channel Kir6.2</fullName>
    </alternativeName>
    <alternativeName>
        <fullName>Potassium channel, inwardly rectifying subfamily J member 11</fullName>
    </alternativeName>
</protein>
<dbReference type="EMBL" id="AF183920">
    <property type="protein sequence ID" value="AAF79058.1"/>
    <property type="molecule type" value="Genomic_DNA"/>
</dbReference>
<dbReference type="EMBL" id="AF183919">
    <property type="protein sequence ID" value="AAF79057.1"/>
    <property type="molecule type" value="mRNA"/>
</dbReference>
<dbReference type="RefSeq" id="NP_001166445.1">
    <property type="nucleotide sequence ID" value="NM_001172974.1"/>
</dbReference>
<dbReference type="SMR" id="Q9JHJ9"/>
<dbReference type="FunCoup" id="Q9JHJ9">
    <property type="interactions" value="69"/>
</dbReference>
<dbReference type="STRING" id="10141.ENSCPOP00000019931"/>
<dbReference type="Ensembl" id="ENSCPOT00000004187.3">
    <property type="protein sequence ID" value="ENSCPOP00000019931.1"/>
    <property type="gene ID" value="ENSCPOG00000004142.4"/>
</dbReference>
<dbReference type="GeneID" id="100135564"/>
<dbReference type="KEGG" id="cpoc:100135564"/>
<dbReference type="CTD" id="3767"/>
<dbReference type="VEuPathDB" id="HostDB:ENSCPOG00000004142"/>
<dbReference type="eggNOG" id="KOG3827">
    <property type="taxonomic scope" value="Eukaryota"/>
</dbReference>
<dbReference type="GeneTree" id="ENSGT01130000278330"/>
<dbReference type="HOGENOM" id="CLU_022738_4_0_1"/>
<dbReference type="InParanoid" id="Q9JHJ9"/>
<dbReference type="OMA" id="FGMVWWL"/>
<dbReference type="OrthoDB" id="273257at2759"/>
<dbReference type="TreeFam" id="TF313676"/>
<dbReference type="Proteomes" id="UP000005447">
    <property type="component" value="Unassembled WGS sequence"/>
</dbReference>
<dbReference type="Bgee" id="ENSCPOG00000004142">
    <property type="expression patterns" value="Expressed in heart left ventricle and 7 other cell types or tissues"/>
</dbReference>
<dbReference type="GO" id="GO:0005737">
    <property type="term" value="C:cytoplasm"/>
    <property type="evidence" value="ECO:0007669"/>
    <property type="project" value="Ensembl"/>
</dbReference>
<dbReference type="GO" id="GO:0008282">
    <property type="term" value="C:inward rectifying potassium channel"/>
    <property type="evidence" value="ECO:0007669"/>
    <property type="project" value="Ensembl"/>
</dbReference>
<dbReference type="GO" id="GO:0030315">
    <property type="term" value="C:T-tubule"/>
    <property type="evidence" value="ECO:0007669"/>
    <property type="project" value="Ensembl"/>
</dbReference>
<dbReference type="GO" id="GO:0030506">
    <property type="term" value="F:ankyrin binding"/>
    <property type="evidence" value="ECO:0007669"/>
    <property type="project" value="Ensembl"/>
</dbReference>
<dbReference type="GO" id="GO:0005524">
    <property type="term" value="F:ATP binding"/>
    <property type="evidence" value="ECO:0007669"/>
    <property type="project" value="UniProtKB-KW"/>
</dbReference>
<dbReference type="GO" id="GO:0015272">
    <property type="term" value="F:ATP-activated inward rectifier potassium channel activity"/>
    <property type="evidence" value="ECO:0007669"/>
    <property type="project" value="Ensembl"/>
</dbReference>
<dbReference type="GO" id="GO:0046872">
    <property type="term" value="F:metal ion binding"/>
    <property type="evidence" value="ECO:0007669"/>
    <property type="project" value="UniProtKB-KW"/>
</dbReference>
<dbReference type="GO" id="GO:0044325">
    <property type="term" value="F:transmembrane transporter binding"/>
    <property type="evidence" value="ECO:0007669"/>
    <property type="project" value="Ensembl"/>
</dbReference>
<dbReference type="GO" id="GO:0099508">
    <property type="term" value="F:voltage-gated monoatomic ion channel activity involved in regulation of presynaptic membrane potential"/>
    <property type="evidence" value="ECO:0007669"/>
    <property type="project" value="Ensembl"/>
</dbReference>
<dbReference type="GO" id="GO:0001508">
    <property type="term" value="P:action potential"/>
    <property type="evidence" value="ECO:0007669"/>
    <property type="project" value="Ensembl"/>
</dbReference>
<dbReference type="GO" id="GO:0006915">
    <property type="term" value="P:apoptotic process"/>
    <property type="evidence" value="ECO:0007669"/>
    <property type="project" value="Ensembl"/>
</dbReference>
<dbReference type="GO" id="GO:0061762">
    <property type="term" value="P:CAMKK-AMPK signaling cascade"/>
    <property type="evidence" value="ECO:0007669"/>
    <property type="project" value="Ensembl"/>
</dbReference>
<dbReference type="GO" id="GO:0031669">
    <property type="term" value="P:cellular response to nutrient levels"/>
    <property type="evidence" value="ECO:0007669"/>
    <property type="project" value="Ensembl"/>
</dbReference>
<dbReference type="GO" id="GO:0008340">
    <property type="term" value="P:determination of adult lifespan"/>
    <property type="evidence" value="ECO:0007669"/>
    <property type="project" value="Ensembl"/>
</dbReference>
<dbReference type="GO" id="GO:0006006">
    <property type="term" value="P:glucose metabolic process"/>
    <property type="evidence" value="ECO:0007669"/>
    <property type="project" value="Ensembl"/>
</dbReference>
<dbReference type="GO" id="GO:0046676">
    <property type="term" value="P:negative regulation of insulin secretion"/>
    <property type="evidence" value="ECO:0007669"/>
    <property type="project" value="Ensembl"/>
</dbReference>
<dbReference type="GO" id="GO:0050877">
    <property type="term" value="P:nervous system process"/>
    <property type="evidence" value="ECO:0007669"/>
    <property type="project" value="Ensembl"/>
</dbReference>
<dbReference type="GO" id="GO:1990573">
    <property type="term" value="P:potassium ion import across plasma membrane"/>
    <property type="evidence" value="ECO:0007669"/>
    <property type="project" value="Ensembl"/>
</dbReference>
<dbReference type="GO" id="GO:0034765">
    <property type="term" value="P:regulation of monoatomic ion transmembrane transport"/>
    <property type="evidence" value="ECO:0007669"/>
    <property type="project" value="TreeGrafter"/>
</dbReference>
<dbReference type="GO" id="GO:0033198">
    <property type="term" value="P:response to ATP"/>
    <property type="evidence" value="ECO:0007669"/>
    <property type="project" value="Ensembl"/>
</dbReference>
<dbReference type="GO" id="GO:0001666">
    <property type="term" value="P:response to hypoxia"/>
    <property type="evidence" value="ECO:0007669"/>
    <property type="project" value="Ensembl"/>
</dbReference>
<dbReference type="GO" id="GO:0002931">
    <property type="term" value="P:response to ischemia"/>
    <property type="evidence" value="ECO:0007669"/>
    <property type="project" value="Ensembl"/>
</dbReference>
<dbReference type="GO" id="GO:1904638">
    <property type="term" value="P:response to resveratrol"/>
    <property type="evidence" value="ECO:0007669"/>
    <property type="project" value="Ensembl"/>
</dbReference>
<dbReference type="GO" id="GO:0009410">
    <property type="term" value="P:response to xenobiotic stimulus"/>
    <property type="evidence" value="ECO:0007669"/>
    <property type="project" value="Ensembl"/>
</dbReference>
<dbReference type="GO" id="GO:0003229">
    <property type="term" value="P:ventricular cardiac muscle tissue development"/>
    <property type="evidence" value="ECO:0007669"/>
    <property type="project" value="Ensembl"/>
</dbReference>
<dbReference type="FunFam" id="1.10.287.70:FF:000050">
    <property type="entry name" value="ATP-sensitive inward rectifier potassium channel 11"/>
    <property type="match status" value="1"/>
</dbReference>
<dbReference type="FunFam" id="2.60.40.1400:FF:000001">
    <property type="entry name" value="G protein-activated inward rectifier potassium channel 2"/>
    <property type="match status" value="1"/>
</dbReference>
<dbReference type="Gene3D" id="1.10.287.70">
    <property type="match status" value="1"/>
</dbReference>
<dbReference type="Gene3D" id="2.60.40.1400">
    <property type="entry name" value="G protein-activated inward rectifier potassium channel 1"/>
    <property type="match status" value="1"/>
</dbReference>
<dbReference type="InterPro" id="IPR014756">
    <property type="entry name" value="Ig_E-set"/>
</dbReference>
<dbReference type="InterPro" id="IPR041647">
    <property type="entry name" value="IRK_C"/>
</dbReference>
<dbReference type="InterPro" id="IPR016449">
    <property type="entry name" value="K_chnl_inward-rec_Kir"/>
</dbReference>
<dbReference type="InterPro" id="IPR003279">
    <property type="entry name" value="K_chnl_inward-rec_Kir6.2"/>
</dbReference>
<dbReference type="InterPro" id="IPR013518">
    <property type="entry name" value="K_chnl_inward-rec_Kir_cyto"/>
</dbReference>
<dbReference type="InterPro" id="IPR040445">
    <property type="entry name" value="Kir_TM"/>
</dbReference>
<dbReference type="PANTHER" id="PTHR11767:SF44">
    <property type="entry name" value="ATP-SENSITIVE INWARD RECTIFIER POTASSIUM CHANNEL 11"/>
    <property type="match status" value="1"/>
</dbReference>
<dbReference type="PANTHER" id="PTHR11767">
    <property type="entry name" value="INWARD RECTIFIER POTASSIUM CHANNEL"/>
    <property type="match status" value="1"/>
</dbReference>
<dbReference type="Pfam" id="PF01007">
    <property type="entry name" value="IRK"/>
    <property type="match status" value="1"/>
</dbReference>
<dbReference type="Pfam" id="PF17655">
    <property type="entry name" value="IRK_C"/>
    <property type="match status" value="1"/>
</dbReference>
<dbReference type="PIRSF" id="PIRSF005465">
    <property type="entry name" value="GIRK_kir"/>
    <property type="match status" value="1"/>
</dbReference>
<dbReference type="PRINTS" id="PR01332">
    <property type="entry name" value="KIR62CHANNEL"/>
</dbReference>
<dbReference type="PRINTS" id="PR01320">
    <property type="entry name" value="KIRCHANNEL"/>
</dbReference>
<dbReference type="SUPFAM" id="SSF81296">
    <property type="entry name" value="E set domains"/>
    <property type="match status" value="1"/>
</dbReference>
<dbReference type="SUPFAM" id="SSF81324">
    <property type="entry name" value="Voltage-gated potassium channels"/>
    <property type="match status" value="1"/>
</dbReference>
<keyword id="KW-0067">ATP-binding</keyword>
<keyword id="KW-1015">Disulfide bond</keyword>
<keyword id="KW-0407">Ion channel</keyword>
<keyword id="KW-0406">Ion transport</keyword>
<keyword id="KW-0472">Membrane</keyword>
<keyword id="KW-0479">Metal-binding</keyword>
<keyword id="KW-0547">Nucleotide-binding</keyword>
<keyword id="KW-0597">Phosphoprotein</keyword>
<keyword id="KW-0630">Potassium</keyword>
<keyword id="KW-0633">Potassium transport</keyword>
<keyword id="KW-1185">Reference proteome</keyword>
<keyword id="KW-0812">Transmembrane</keyword>
<keyword id="KW-1133">Transmembrane helix</keyword>
<keyword id="KW-0813">Transport</keyword>
<keyword id="KW-0851">Voltage-gated channel</keyword>